<comment type="function">
    <text>Involved in the assembly process of the P-ring formation. It may associate with FlgF on the rod constituting a structure essential for the P-ring assembly or may act as a modulator protein for the P-ring assembly.</text>
</comment>
<comment type="subcellular location">
    <subcellularLocation>
        <location evidence="2">Periplasm</location>
    </subcellularLocation>
</comment>
<comment type="similarity">
    <text evidence="2">Belongs to the FlgA family.</text>
</comment>
<dbReference type="EMBL" id="U00096">
    <property type="protein sequence ID" value="AAC74156.1"/>
    <property type="molecule type" value="Genomic_DNA"/>
</dbReference>
<dbReference type="EMBL" id="AP009048">
    <property type="protein sequence ID" value="BAA35880.1"/>
    <property type="molecule type" value="Genomic_DNA"/>
</dbReference>
<dbReference type="PIR" id="E64850">
    <property type="entry name" value="E64850"/>
</dbReference>
<dbReference type="RefSeq" id="NP_415590.1">
    <property type="nucleotide sequence ID" value="NC_000913.3"/>
</dbReference>
<dbReference type="RefSeq" id="WP_000905458.1">
    <property type="nucleotide sequence ID" value="NZ_SSZK01000053.1"/>
</dbReference>
<dbReference type="SMR" id="P75933"/>
<dbReference type="BioGRID" id="4260070">
    <property type="interactions" value="183"/>
</dbReference>
<dbReference type="FunCoup" id="P75933">
    <property type="interactions" value="47"/>
</dbReference>
<dbReference type="IntAct" id="P75933">
    <property type="interactions" value="2"/>
</dbReference>
<dbReference type="STRING" id="511145.b1072"/>
<dbReference type="PaxDb" id="511145-b1072"/>
<dbReference type="EnsemblBacteria" id="AAC74156">
    <property type="protein sequence ID" value="AAC74156"/>
    <property type="gene ID" value="b1072"/>
</dbReference>
<dbReference type="GeneID" id="75203659"/>
<dbReference type="GeneID" id="946300"/>
<dbReference type="KEGG" id="ecj:JW1059"/>
<dbReference type="KEGG" id="eco:b1072"/>
<dbReference type="KEGG" id="ecoc:C3026_06505"/>
<dbReference type="PATRIC" id="fig|1411691.4.peg.1196"/>
<dbReference type="EchoBASE" id="EB4160"/>
<dbReference type="eggNOG" id="COG1261">
    <property type="taxonomic scope" value="Bacteria"/>
</dbReference>
<dbReference type="HOGENOM" id="CLU_070510_2_0_6"/>
<dbReference type="InParanoid" id="P75933"/>
<dbReference type="OMA" id="RYEIQVN"/>
<dbReference type="OrthoDB" id="7065435at2"/>
<dbReference type="PhylomeDB" id="P75933"/>
<dbReference type="BioCyc" id="EcoCyc:G357-MONOMER"/>
<dbReference type="PRO" id="PR:P75933"/>
<dbReference type="Proteomes" id="UP000000625">
    <property type="component" value="Chromosome"/>
</dbReference>
<dbReference type="GO" id="GO:0042597">
    <property type="term" value="C:periplasmic space"/>
    <property type="evidence" value="ECO:0007669"/>
    <property type="project" value="UniProtKB-SubCell"/>
</dbReference>
<dbReference type="GO" id="GO:0044780">
    <property type="term" value="P:bacterial-type flagellum assembly"/>
    <property type="evidence" value="ECO:0007669"/>
    <property type="project" value="InterPro"/>
</dbReference>
<dbReference type="GO" id="GO:0071973">
    <property type="term" value="P:bacterial-type flagellum-dependent cell motility"/>
    <property type="evidence" value="ECO:0000315"/>
    <property type="project" value="EcoCyc"/>
</dbReference>
<dbReference type="CDD" id="cd11614">
    <property type="entry name" value="SAF_CpaB_FlgA_like"/>
    <property type="match status" value="1"/>
</dbReference>
<dbReference type="FunFam" id="2.30.30.760:FF:000001">
    <property type="entry name" value="Flagella basal body P-ring formation protein FlgA"/>
    <property type="match status" value="1"/>
</dbReference>
<dbReference type="Gene3D" id="2.30.30.760">
    <property type="match status" value="1"/>
</dbReference>
<dbReference type="Gene3D" id="3.90.1210.10">
    <property type="entry name" value="Antifreeze-like/N-acetylneuraminic acid synthase C-terminal domain"/>
    <property type="match status" value="1"/>
</dbReference>
<dbReference type="InterPro" id="IPR017585">
    <property type="entry name" value="Flag_basal_body_FlgA_C"/>
</dbReference>
<dbReference type="InterPro" id="IPR039246">
    <property type="entry name" value="Flagellar_FlgA"/>
</dbReference>
<dbReference type="InterPro" id="IPR013974">
    <property type="entry name" value="SAF"/>
</dbReference>
<dbReference type="NCBIfam" id="TIGR03170">
    <property type="entry name" value="flgA_cterm"/>
    <property type="match status" value="1"/>
</dbReference>
<dbReference type="PANTHER" id="PTHR36307">
    <property type="entry name" value="FLAGELLA BASAL BODY P-RING FORMATION PROTEIN FLGA"/>
    <property type="match status" value="1"/>
</dbReference>
<dbReference type="PANTHER" id="PTHR36307:SF1">
    <property type="entry name" value="FLAGELLA BASAL BODY P-RING FORMATION PROTEIN FLGA"/>
    <property type="match status" value="1"/>
</dbReference>
<dbReference type="Pfam" id="PF13144">
    <property type="entry name" value="ChapFlgA"/>
    <property type="match status" value="1"/>
</dbReference>
<dbReference type="SMART" id="SM00858">
    <property type="entry name" value="SAF"/>
    <property type="match status" value="1"/>
</dbReference>
<gene>
    <name type="primary">flgA</name>
    <name type="ordered locus">b1072</name>
    <name type="ordered locus">JW1059</name>
</gene>
<protein>
    <recommendedName>
        <fullName>Flagella basal body P-ring formation protein FlgA</fullName>
    </recommendedName>
</protein>
<feature type="signal peptide" description="Or 26" evidence="1">
    <location>
        <begin position="1"/>
        <end position="21"/>
    </location>
</feature>
<feature type="chain" id="PRO_0000009341" description="Flagella basal body P-ring formation protein FlgA">
    <location>
        <begin position="22"/>
        <end position="219"/>
    </location>
</feature>
<sequence>MLIIKRSVAIIAILFSPLSTASNLTSQLHNFFSAQLAGVSDEVRVSIRTAPNLLPPCEQPLLSMSNNSRLWGNVNVLARCGNDKRYLQVNVQATGNYVVAAMPIARGGKLEAGNVKLKRGRLDTLPPRTVLDINQLVDAISLRDLSPDQPIQLTQFRQAWRVKAGQRVNVIASGDGFSANAEGQALNNAAVAQNARVRMVSGQVVSGVVDADGNILINL</sequence>
<keyword id="KW-1005">Bacterial flagellum biogenesis</keyword>
<keyword id="KW-0574">Periplasm</keyword>
<keyword id="KW-1185">Reference proteome</keyword>
<keyword id="KW-0732">Signal</keyword>
<organism>
    <name type="scientific">Escherichia coli (strain K12)</name>
    <dbReference type="NCBI Taxonomy" id="83333"/>
    <lineage>
        <taxon>Bacteria</taxon>
        <taxon>Pseudomonadati</taxon>
        <taxon>Pseudomonadota</taxon>
        <taxon>Gammaproteobacteria</taxon>
        <taxon>Enterobacterales</taxon>
        <taxon>Enterobacteriaceae</taxon>
        <taxon>Escherichia</taxon>
    </lineage>
</organism>
<evidence type="ECO:0000255" key="1"/>
<evidence type="ECO:0000305" key="2"/>
<name>FLGA_ECOLI</name>
<reference key="1">
    <citation type="journal article" date="1996" name="DNA Res.">
        <title>A 718-kb DNA sequence of the Escherichia coli K-12 genome corresponding to the 12.7-28.0 min region on the linkage map.</title>
        <authorList>
            <person name="Oshima T."/>
            <person name="Aiba H."/>
            <person name="Baba T."/>
            <person name="Fujita K."/>
            <person name="Hayashi K."/>
            <person name="Honjo A."/>
            <person name="Ikemoto K."/>
            <person name="Inada T."/>
            <person name="Itoh T."/>
            <person name="Kajihara M."/>
            <person name="Kanai K."/>
            <person name="Kashimoto K."/>
            <person name="Kimura S."/>
            <person name="Kitagawa M."/>
            <person name="Makino K."/>
            <person name="Masuda S."/>
            <person name="Miki T."/>
            <person name="Mizobuchi K."/>
            <person name="Mori H."/>
            <person name="Motomura K."/>
            <person name="Nakamura Y."/>
            <person name="Nashimoto H."/>
            <person name="Nishio Y."/>
            <person name="Saito N."/>
            <person name="Sampei G."/>
            <person name="Seki Y."/>
            <person name="Tagami H."/>
            <person name="Takemoto K."/>
            <person name="Wada C."/>
            <person name="Yamamoto Y."/>
            <person name="Yano M."/>
            <person name="Horiuchi T."/>
        </authorList>
    </citation>
    <scope>NUCLEOTIDE SEQUENCE [LARGE SCALE GENOMIC DNA]</scope>
    <source>
        <strain>K12 / W3110 / ATCC 27325 / DSM 5911</strain>
    </source>
</reference>
<reference key="2">
    <citation type="journal article" date="1997" name="Science">
        <title>The complete genome sequence of Escherichia coli K-12.</title>
        <authorList>
            <person name="Blattner F.R."/>
            <person name="Plunkett G. III"/>
            <person name="Bloch C.A."/>
            <person name="Perna N.T."/>
            <person name="Burland V."/>
            <person name="Riley M."/>
            <person name="Collado-Vides J."/>
            <person name="Glasner J.D."/>
            <person name="Rode C.K."/>
            <person name="Mayhew G.F."/>
            <person name="Gregor J."/>
            <person name="Davis N.W."/>
            <person name="Kirkpatrick H.A."/>
            <person name="Goeden M.A."/>
            <person name="Rose D.J."/>
            <person name="Mau B."/>
            <person name="Shao Y."/>
        </authorList>
    </citation>
    <scope>NUCLEOTIDE SEQUENCE [LARGE SCALE GENOMIC DNA]</scope>
    <source>
        <strain>K12 / MG1655 / ATCC 47076</strain>
    </source>
</reference>
<reference key="3">
    <citation type="journal article" date="2006" name="Mol. Syst. Biol.">
        <title>Highly accurate genome sequences of Escherichia coli K-12 strains MG1655 and W3110.</title>
        <authorList>
            <person name="Hayashi K."/>
            <person name="Morooka N."/>
            <person name="Yamamoto Y."/>
            <person name="Fujita K."/>
            <person name="Isono K."/>
            <person name="Choi S."/>
            <person name="Ohtsubo E."/>
            <person name="Baba T."/>
            <person name="Wanner B.L."/>
            <person name="Mori H."/>
            <person name="Horiuchi T."/>
        </authorList>
    </citation>
    <scope>NUCLEOTIDE SEQUENCE [LARGE SCALE GENOMIC DNA]</scope>
    <source>
        <strain>K12 / W3110 / ATCC 27325 / DSM 5911</strain>
    </source>
</reference>
<proteinExistence type="inferred from homology"/>
<accession>P75933</accession>